<proteinExistence type="evidence at protein level"/>
<accession>Q06114</accession>
<accession>Q663L1</accession>
<comment type="function">
    <text evidence="4 5 7 8">Component of the type III secretion system (T3SS), also called injectisome, which is used to inject bacterial effector proteins into eukaryotic host cells (PubMed:15784589, PubMed:23297383). YopB/SctE and YopD/SctB are inserted into the host membrane where they form a pore and allow the translocation of effector proteins into the cytosol of target cells (PubMed:23297383, PubMed:8596454, PubMed:8918459). Is an essential virulence determinant (PubMed:8918459). Required for YopE and YopH translocation (PubMed:15784589, PubMed:8596454, PubMed:8918459). Shows membrane disruptive activity in vitro (PubMed:8918459).</text>
</comment>
<comment type="function">
    <text evidence="3 4">Interaction with the host cell triggers a signaling response, via activation of the small GTPase Ras, the MAPK kinases ERK and JNK and the nuclear factor NF-kappa-B pathways, and production of the proinflammatory cytokine interleukin-8 (IL-8) (PubMed:12603736, PubMed:15784589). YopB/SctE-dependent signaling response is counteracted by YopE, YopH and YopJ in infected host cells (PubMed:12603736). YopB/SctE is directly responsible for signaling and its insertion in the membrane is important to activate the signaling response in the host cell (PubMed:15784589).</text>
</comment>
<comment type="subunit">
    <text evidence="1 3 4 5 6 8">The core secretion machinery of the T3SS is composed of approximately 20 different proteins, including cytoplasmic components, a base, an export apparatus and a needle (PubMed:30107569). This subunit is involved in the formation of a pore, called the translocon, in host membrane (PubMed:12603736, PubMed:23297383, PubMed:8918459). Interacts with YopD/SctB (PubMed:15784589). Together with YopD/SctB, forms a multimeric integral membrane complex (By similarity).</text>
</comment>
<comment type="subcellular location">
    <subcellularLocation>
        <location evidence="4">Secreted</location>
    </subcellularLocation>
    <subcellularLocation>
        <location evidence="5 12">Host membrane</location>
        <topology evidence="2">Multi-pass membrane protein</topology>
    </subcellularLocation>
    <text evidence="1 8">Secreted via the type III secretion system (T3SS) (By similarity). After export via the T3SS, YopB/SctE and YopD/SctB form a multimeric integral membrane complex in eukaryotic cell membranes (By similarity). Not translocated into the target cell cytoplasm during infection (PubMed:8918459).</text>
</comment>
<comment type="disruption phenotype">
    <text evidence="7 8">The mutant strain displays a wild-type phenotype with respect to in vitro Yop regulation and secretion but it cannot translocate YopE and YopH into the target cell cytoplasm, fails to elicit a cytotoxic response in cultured HeLa cells and is unable to inhibit phagocytosis by macrophage-like J774 cells (PubMed:8918459). Additionally, the mutant is avirulent in the mouse model (PubMed:8918459). The yopBD mutant can secrete YopH at the same level as the wild-type strain in vivo but is unable to translocate YopH into the cytosol of HeLa cells (PubMed:8596454).</text>
</comment>
<comment type="similarity">
    <text evidence="11">Belongs to the SctE/SipB/YopB family.</text>
</comment>
<protein>
    <recommendedName>
        <fullName evidence="11">Type 3 secretion system translocon protein SctE</fullName>
        <shortName evidence="11">T3SS translocon protein SctE</shortName>
    </recommendedName>
    <alternativeName>
        <fullName evidence="10">Yersinia outer protein B</fullName>
    </alternativeName>
</protein>
<evidence type="ECO:0000250" key="1">
    <source>
        <dbReference type="UniProtKB" id="P37131"/>
    </source>
</evidence>
<evidence type="ECO:0000255" key="2"/>
<evidence type="ECO:0000269" key="3">
    <source>
    </source>
</evidence>
<evidence type="ECO:0000269" key="4">
    <source>
    </source>
</evidence>
<evidence type="ECO:0000269" key="5">
    <source>
    </source>
</evidence>
<evidence type="ECO:0000269" key="6">
    <source>
    </source>
</evidence>
<evidence type="ECO:0000269" key="7">
    <source>
    </source>
</evidence>
<evidence type="ECO:0000269" key="8">
    <source>
    </source>
</evidence>
<evidence type="ECO:0000303" key="9">
    <source>
    </source>
</evidence>
<evidence type="ECO:0000303" key="10">
    <source>
    </source>
</evidence>
<evidence type="ECO:0000305" key="11"/>
<evidence type="ECO:0000305" key="12">
    <source>
    </source>
</evidence>
<sequence length="401" mass="41795">MSALITHDRSTPVTGSLLPYVETPAPAPLQTQQVAGELKDKNGGVSSQGVQLPAPLAVVASQVTEGQQQEVTKLLESVTRGAAGSQLISNYVSVLTKFTLASPDTFEIELGKLVSNLEEVRKDIKIADIQRLHEQNMKKIEENQEKIKETEENAKQVKKSGIASKIFGWLSAIASVIVGAIMVASGVGAVAGAMMVASGVIGMANMAVKQAAEDGLISQEAMKILGPILTAIEVALTVVSTVMTFGGSALKCLANIGAKLGANTASLAAKGAEFSAKVAQISTGISNTVGSAVTKLGGSFAGLTMSHAIRTGSQATQVAVGVGSGITQTINNKKQADLQHNNADLALNKADMAALQSIIDRLKEELSHLSESHQQVMELIFQMINAKGDMLHNLAGRPHTV</sequence>
<reference key="1">
    <citation type="journal article" date="1993" name="Infect. Immun.">
        <title>YopB and YopD constitute a novel class of Yersinia Yop proteins.</title>
        <authorList>
            <person name="Haakansson S."/>
            <person name="Bergman T."/>
            <person name="Vanooteghem J.-C."/>
            <person name="Cornelis G."/>
            <person name="Wolf-Watz H."/>
        </authorList>
    </citation>
    <scope>NUCLEOTIDE SEQUENCE [GENOMIC DNA]</scope>
    <scope>PARTIAL PROTEIN SEQUENCE</scope>
    <source>
        <strain>YPIII / Serotype O:3</strain>
        <plasmid>pIB1</plasmid>
    </source>
</reference>
<reference key="2">
    <citation type="journal article" date="2004" name="Proc. Natl. Acad. Sci. U.S.A.">
        <title>Insights into the evolution of Yersinia pestis through whole-genome comparison with Yersinia pseudotuberculosis.</title>
        <authorList>
            <person name="Chain P.S.G."/>
            <person name="Carniel E."/>
            <person name="Larimer F.W."/>
            <person name="Lamerdin J."/>
            <person name="Stoutland P.O."/>
            <person name="Regala W.M."/>
            <person name="Georgescu A.M."/>
            <person name="Vergez L.M."/>
            <person name="Land M.L."/>
            <person name="Motin V.L."/>
            <person name="Brubaker R.R."/>
            <person name="Fowler J."/>
            <person name="Hinnebusch J."/>
            <person name="Marceau M."/>
            <person name="Medigue C."/>
            <person name="Simonet M."/>
            <person name="Chenal-Francisque V."/>
            <person name="Souza B."/>
            <person name="Dacheux D."/>
            <person name="Elliott J.M."/>
            <person name="Derbise A."/>
            <person name="Hauser L.J."/>
            <person name="Garcia E."/>
        </authorList>
    </citation>
    <scope>NUCLEOTIDE SEQUENCE [LARGE SCALE GENOMIC DNA]</scope>
    <source>
        <strain>IP32953</strain>
        <plasmid>pYV</plasmid>
    </source>
</reference>
<reference key="3">
    <citation type="journal article" date="1995" name="Mol. Microbiol.">
        <title>Cell-surface-bound Yersinia translocate the protein tyrosine phosphatase YopH by a polarized mechanism into the target cell.</title>
        <authorList>
            <person name="Persson C."/>
            <person name="Nordfelth R."/>
            <person name="Holmstroem A."/>
            <person name="Haakansson S."/>
            <person name="Rosqvist R."/>
            <person name="Wolf-Watz H."/>
        </authorList>
    </citation>
    <scope>FUNCTION</scope>
    <scope>DISRUPTION PHENOTYPE</scope>
    <source>
        <strain>YPIII / Serotype O:3</strain>
    </source>
</reference>
<reference key="4">
    <citation type="journal article" date="1996" name="EMBO J.">
        <title>The YopB protein of Yersinia pseudotuberculosis is essential for the translocation of Yop effector proteins across the target cell plasma membrane and displays a contact-dependent membrane disrupting activity.</title>
        <authorList>
            <person name="Haakansson S."/>
            <person name="Schesser K."/>
            <person name="Persson C."/>
            <person name="Galyov E.E."/>
            <person name="Rosqvist R."/>
            <person name="Homble F."/>
            <person name="Wolf-Watz H."/>
        </authorList>
    </citation>
    <scope>FUNCTION</scope>
    <scope>SUBUNIT</scope>
    <scope>SUBCELLULAR LOCATION</scope>
    <scope>DISRUPTION PHENOTYPE</scope>
</reference>
<reference key="5">
    <citation type="journal article" date="2003" name="Mol. Microbiol.">
        <title>Proinflammatory signalling stimulated by the type III translocation factor YopB is counteracted by multiple effectors in epithelial cells infected with Yersinia pseudotuberculosis.</title>
        <authorList>
            <person name="Viboud G.I."/>
            <person name="So S.S."/>
            <person name="Ryndak M.B."/>
            <person name="Bliska J.B."/>
        </authorList>
    </citation>
    <scope>FUNCTION IN INDUCTION OF A SIGNALING RESPONSE</scope>
    <scope>SUBUNIT</scope>
</reference>
<reference key="6">
    <citation type="journal article" date="2005" name="Infect. Immun.">
        <title>Role of predicted transmembrane domains for type III translocation, pore formation, and signaling by the Yersinia pseudotuberculosis YopB protein.</title>
        <authorList>
            <person name="Ryndak M.B."/>
            <person name="Chung H."/>
            <person name="London E."/>
            <person name="Bliska J.B."/>
        </authorList>
    </citation>
    <scope>FUNCTION</scope>
    <scope>INTERACTION WITH YOPD/SCTB</scope>
    <scope>SUBCELLULAR LOCATION</scope>
    <scope>MUTAGENESIS OF 175-SER-VAL-176 AND 239-VAL-SER-240</scope>
    <source>
        <strain>YP126 / Serotype O:3</strain>
    </source>
</reference>
<reference key="7">
    <citation type="journal article" date="2013" name="Infect. Immun.">
        <title>Impact of host membrane pore formation by the Yersinia pseudotuberculosis type III secretion system on the macrophage innate immune response.</title>
        <authorList>
            <person name="Kwuan L."/>
            <person name="Adams W."/>
            <person name="Auerbuch V."/>
        </authorList>
    </citation>
    <scope>FUNCTION</scope>
    <scope>SUBUNIT</scope>
    <scope>SUBCELLULAR LOCATION</scope>
</reference>
<reference key="8">
    <citation type="journal article" date="2018" name="FEMS Microbiol. Lett.">
        <title>Bacterial type III secretion systems: a complex device for the delivery of bacterial effector proteins into eukaryotic host cells.</title>
        <authorList>
            <person name="Wagner S."/>
            <person name="Grin I."/>
            <person name="Malmsheimer S."/>
            <person name="Singh N."/>
            <person name="Torres-Vargas C.E."/>
            <person name="Westerhausen S."/>
        </authorList>
    </citation>
    <scope>REVIEW</scope>
    <scope>NOMENCLATURE</scope>
    <scope>SUBUNIT</scope>
</reference>
<geneLocation type="plasmid">
    <name>pIB1</name>
</geneLocation>
<geneLocation type="plasmid">
    <name>pYV</name>
</geneLocation>
<name>SCTE_YERPS</name>
<keyword id="KW-0175">Coiled coil</keyword>
<keyword id="KW-0903">Direct protein sequencing</keyword>
<keyword id="KW-1043">Host membrane</keyword>
<keyword id="KW-0472">Membrane</keyword>
<keyword id="KW-0614">Plasmid</keyword>
<keyword id="KW-0964">Secreted</keyword>
<keyword id="KW-0812">Transmembrane</keyword>
<keyword id="KW-1133">Transmembrane helix</keyword>
<keyword id="KW-0843">Virulence</keyword>
<feature type="chain" id="PRO_0000066362" description="Type 3 secretion system translocon protein SctE">
    <location>
        <begin position="1"/>
        <end position="401"/>
    </location>
</feature>
<feature type="transmembrane region" description="Helical" evidence="2">
    <location>
        <begin position="176"/>
        <end position="196"/>
    </location>
</feature>
<feature type="transmembrane region" description="Helical" evidence="2">
    <location>
        <begin position="224"/>
        <end position="244"/>
    </location>
</feature>
<feature type="coiled-coil region" evidence="2">
    <location>
        <begin position="129"/>
        <end position="160"/>
    </location>
</feature>
<feature type="coiled-coil region" evidence="2">
    <location>
        <begin position="345"/>
        <end position="379"/>
    </location>
</feature>
<feature type="mutagenesis site" description="Decreases formation of the first transmembrane domain. Is still secreted and interacts with YopD/SctB. Decreases pore formation and the efficiency of YopE and YopJ translocation. Decreases host-cell-signaling and IL-8 production." evidence="4">
    <original>SV</original>
    <variation>PP</variation>
    <location>
        <begin position="175"/>
        <end position="176"/>
    </location>
</feature>
<feature type="mutagenesis site" description="Decreases formation of the second transmembrane domain. Unstable protein, cannot be secreted." evidence="4">
    <original>VS</original>
    <variation>PP</variation>
    <location>
        <begin position="239"/>
        <end position="240"/>
    </location>
</feature>
<gene>
    <name evidence="9" type="primary">sctE</name>
    <name evidence="10" type="synonym">yopB</name>
    <name type="ordered locus">pYV0055</name>
</gene>
<dbReference type="EMBL" id="L06215">
    <property type="protein sequence ID" value="AAA72321.1"/>
    <property type="molecule type" value="Genomic_DNA"/>
</dbReference>
<dbReference type="EMBL" id="BX936399">
    <property type="protein sequence ID" value="CAF25398.1"/>
    <property type="molecule type" value="Genomic_DNA"/>
</dbReference>
<dbReference type="RefSeq" id="WP_011191382.1">
    <property type="nucleotide sequence ID" value="NC_006153.2"/>
</dbReference>
<dbReference type="SMR" id="Q06114"/>
<dbReference type="TCDB" id="1.C.36.2.1">
    <property type="family name" value="the bacterial type iii-target cell pore (iiitcp) family"/>
</dbReference>
<dbReference type="KEGG" id="ypo:BZ17_4278"/>
<dbReference type="KEGG" id="yps:pYV0055"/>
<dbReference type="PATRIC" id="fig|273123.14.peg.4514"/>
<dbReference type="Proteomes" id="UP000001011">
    <property type="component" value="Plasmid pYV"/>
</dbReference>
<dbReference type="GO" id="GO:0005576">
    <property type="term" value="C:extracellular region"/>
    <property type="evidence" value="ECO:0007669"/>
    <property type="project" value="UniProtKB-SubCell"/>
</dbReference>
<dbReference type="GO" id="GO:0033644">
    <property type="term" value="C:host cell membrane"/>
    <property type="evidence" value="ECO:0007669"/>
    <property type="project" value="UniProtKB-SubCell"/>
</dbReference>
<dbReference type="GO" id="GO:0016020">
    <property type="term" value="C:membrane"/>
    <property type="evidence" value="ECO:0007669"/>
    <property type="project" value="UniProtKB-KW"/>
</dbReference>
<dbReference type="InterPro" id="IPR006972">
    <property type="entry name" value="BipB-like_C"/>
</dbReference>
<dbReference type="Pfam" id="PF04888">
    <property type="entry name" value="SseC"/>
    <property type="match status" value="1"/>
</dbReference>
<organism>
    <name type="scientific">Yersinia pseudotuberculosis serotype I (strain IP32953)</name>
    <dbReference type="NCBI Taxonomy" id="273123"/>
    <lineage>
        <taxon>Bacteria</taxon>
        <taxon>Pseudomonadati</taxon>
        <taxon>Pseudomonadota</taxon>
        <taxon>Gammaproteobacteria</taxon>
        <taxon>Enterobacterales</taxon>
        <taxon>Yersiniaceae</taxon>
        <taxon>Yersinia</taxon>
    </lineage>
</organism>